<proteinExistence type="inferred from homology"/>
<name>SYT_HYDCU</name>
<comment type="function">
    <text evidence="1">Catalyzes the attachment of threonine to tRNA(Thr) in a two-step reaction: L-threonine is first activated by ATP to form Thr-AMP and then transferred to the acceptor end of tRNA(Thr). Also edits incorrectly charged L-seryl-tRNA(Thr).</text>
</comment>
<comment type="catalytic activity">
    <reaction evidence="1">
        <text>tRNA(Thr) + L-threonine + ATP = L-threonyl-tRNA(Thr) + AMP + diphosphate + H(+)</text>
        <dbReference type="Rhea" id="RHEA:24624"/>
        <dbReference type="Rhea" id="RHEA-COMP:9670"/>
        <dbReference type="Rhea" id="RHEA-COMP:9704"/>
        <dbReference type="ChEBI" id="CHEBI:15378"/>
        <dbReference type="ChEBI" id="CHEBI:30616"/>
        <dbReference type="ChEBI" id="CHEBI:33019"/>
        <dbReference type="ChEBI" id="CHEBI:57926"/>
        <dbReference type="ChEBI" id="CHEBI:78442"/>
        <dbReference type="ChEBI" id="CHEBI:78534"/>
        <dbReference type="ChEBI" id="CHEBI:456215"/>
        <dbReference type="EC" id="6.1.1.3"/>
    </reaction>
</comment>
<comment type="cofactor">
    <cofactor evidence="1">
        <name>Zn(2+)</name>
        <dbReference type="ChEBI" id="CHEBI:29105"/>
    </cofactor>
    <text evidence="1">Binds 1 zinc ion per subunit.</text>
</comment>
<comment type="subunit">
    <text evidence="1">Homodimer.</text>
</comment>
<comment type="subcellular location">
    <subcellularLocation>
        <location evidence="1">Cytoplasm</location>
    </subcellularLocation>
</comment>
<comment type="similarity">
    <text evidence="1">Belongs to the class-II aminoacyl-tRNA synthetase family.</text>
</comment>
<organism>
    <name type="scientific">Hydrogenovibrio crunogenus (strain DSM 25203 / XCL-2)</name>
    <name type="common">Thiomicrospira crunogena</name>
    <dbReference type="NCBI Taxonomy" id="317025"/>
    <lineage>
        <taxon>Bacteria</taxon>
        <taxon>Pseudomonadati</taxon>
        <taxon>Pseudomonadota</taxon>
        <taxon>Gammaproteobacteria</taxon>
        <taxon>Thiotrichales</taxon>
        <taxon>Piscirickettsiaceae</taxon>
        <taxon>Hydrogenovibrio</taxon>
    </lineage>
</organism>
<gene>
    <name evidence="1" type="primary">thrS</name>
    <name type="ordered locus">Tcr_1667</name>
</gene>
<protein>
    <recommendedName>
        <fullName evidence="1">Threonine--tRNA ligase</fullName>
        <ecNumber evidence="1">6.1.1.3</ecNumber>
    </recommendedName>
    <alternativeName>
        <fullName evidence="1">Threonyl-tRNA synthetase</fullName>
        <shortName evidence="1">ThrRS</shortName>
    </alternativeName>
</protein>
<keyword id="KW-0030">Aminoacyl-tRNA synthetase</keyword>
<keyword id="KW-0067">ATP-binding</keyword>
<keyword id="KW-0963">Cytoplasm</keyword>
<keyword id="KW-0436">Ligase</keyword>
<keyword id="KW-0479">Metal-binding</keyword>
<keyword id="KW-0547">Nucleotide-binding</keyword>
<keyword id="KW-0648">Protein biosynthesis</keyword>
<keyword id="KW-0694">RNA-binding</keyword>
<keyword id="KW-0820">tRNA-binding</keyword>
<keyword id="KW-0862">Zinc</keyword>
<accession>Q31F14</accession>
<reference key="1">
    <citation type="journal article" date="2006" name="PLoS Biol.">
        <title>The genome of deep-sea vent chemolithoautotroph Thiomicrospira crunogena XCL-2.</title>
        <authorList>
            <person name="Scott K.M."/>
            <person name="Sievert S.M."/>
            <person name="Abril F.N."/>
            <person name="Ball L.A."/>
            <person name="Barrett C.J."/>
            <person name="Blake R.A."/>
            <person name="Boller A.J."/>
            <person name="Chain P.S.G."/>
            <person name="Clark J.A."/>
            <person name="Davis C.R."/>
            <person name="Detter C."/>
            <person name="Do K.F."/>
            <person name="Dobrinski K.P."/>
            <person name="Faza B.I."/>
            <person name="Fitzpatrick K.A."/>
            <person name="Freyermuth S.K."/>
            <person name="Harmer T.L."/>
            <person name="Hauser L.J."/>
            <person name="Huegler M."/>
            <person name="Kerfeld C.A."/>
            <person name="Klotz M.G."/>
            <person name="Kong W.W."/>
            <person name="Land M."/>
            <person name="Lapidus A."/>
            <person name="Larimer F.W."/>
            <person name="Longo D.L."/>
            <person name="Lucas S."/>
            <person name="Malfatti S.A."/>
            <person name="Massey S.E."/>
            <person name="Martin D.D."/>
            <person name="McCuddin Z."/>
            <person name="Meyer F."/>
            <person name="Moore J.L."/>
            <person name="Ocampo L.H. Jr."/>
            <person name="Paul J.H."/>
            <person name="Paulsen I.T."/>
            <person name="Reep D.K."/>
            <person name="Ren Q."/>
            <person name="Ross R.L."/>
            <person name="Sato P.Y."/>
            <person name="Thomas P."/>
            <person name="Tinkham L.E."/>
            <person name="Zeruth G.T."/>
        </authorList>
    </citation>
    <scope>NUCLEOTIDE SEQUENCE [LARGE SCALE GENOMIC DNA]</scope>
    <source>
        <strain>DSM 25203 / XCL-2</strain>
    </source>
</reference>
<feature type="chain" id="PRO_1000020546" description="Threonine--tRNA ligase">
    <location>
        <begin position="1"/>
        <end position="642"/>
    </location>
</feature>
<feature type="domain" description="TGS" evidence="2">
    <location>
        <begin position="1"/>
        <end position="61"/>
    </location>
</feature>
<feature type="region of interest" description="Catalytic" evidence="1">
    <location>
        <begin position="242"/>
        <end position="535"/>
    </location>
</feature>
<feature type="binding site" evidence="1">
    <location>
        <position position="333"/>
    </location>
    <ligand>
        <name>Zn(2+)</name>
        <dbReference type="ChEBI" id="CHEBI:29105"/>
    </ligand>
</feature>
<feature type="binding site" evidence="1">
    <location>
        <position position="384"/>
    </location>
    <ligand>
        <name>Zn(2+)</name>
        <dbReference type="ChEBI" id="CHEBI:29105"/>
    </ligand>
</feature>
<feature type="binding site" evidence="1">
    <location>
        <position position="512"/>
    </location>
    <ligand>
        <name>Zn(2+)</name>
        <dbReference type="ChEBI" id="CHEBI:29105"/>
    </ligand>
</feature>
<evidence type="ECO:0000255" key="1">
    <source>
        <dbReference type="HAMAP-Rule" id="MF_00184"/>
    </source>
</evidence>
<evidence type="ECO:0000255" key="2">
    <source>
        <dbReference type="PROSITE-ProRule" id="PRU01228"/>
    </source>
</evidence>
<dbReference type="EC" id="6.1.1.3" evidence="1"/>
<dbReference type="EMBL" id="CP000109">
    <property type="protein sequence ID" value="ABB42259.1"/>
    <property type="molecule type" value="Genomic_DNA"/>
</dbReference>
<dbReference type="SMR" id="Q31F14"/>
<dbReference type="STRING" id="317025.Tcr_1667"/>
<dbReference type="KEGG" id="tcx:Tcr_1667"/>
<dbReference type="eggNOG" id="COG0441">
    <property type="taxonomic scope" value="Bacteria"/>
</dbReference>
<dbReference type="HOGENOM" id="CLU_008554_0_1_6"/>
<dbReference type="OrthoDB" id="9802304at2"/>
<dbReference type="GO" id="GO:0005829">
    <property type="term" value="C:cytosol"/>
    <property type="evidence" value="ECO:0007669"/>
    <property type="project" value="TreeGrafter"/>
</dbReference>
<dbReference type="GO" id="GO:0005524">
    <property type="term" value="F:ATP binding"/>
    <property type="evidence" value="ECO:0007669"/>
    <property type="project" value="UniProtKB-UniRule"/>
</dbReference>
<dbReference type="GO" id="GO:0046872">
    <property type="term" value="F:metal ion binding"/>
    <property type="evidence" value="ECO:0007669"/>
    <property type="project" value="UniProtKB-KW"/>
</dbReference>
<dbReference type="GO" id="GO:0004829">
    <property type="term" value="F:threonine-tRNA ligase activity"/>
    <property type="evidence" value="ECO:0007669"/>
    <property type="project" value="UniProtKB-UniRule"/>
</dbReference>
<dbReference type="GO" id="GO:0000049">
    <property type="term" value="F:tRNA binding"/>
    <property type="evidence" value="ECO:0007669"/>
    <property type="project" value="UniProtKB-KW"/>
</dbReference>
<dbReference type="GO" id="GO:0006435">
    <property type="term" value="P:threonyl-tRNA aminoacylation"/>
    <property type="evidence" value="ECO:0007669"/>
    <property type="project" value="UniProtKB-UniRule"/>
</dbReference>
<dbReference type="CDD" id="cd01667">
    <property type="entry name" value="TGS_ThrRS"/>
    <property type="match status" value="1"/>
</dbReference>
<dbReference type="CDD" id="cd00860">
    <property type="entry name" value="ThrRS_anticodon"/>
    <property type="match status" value="1"/>
</dbReference>
<dbReference type="CDD" id="cd00771">
    <property type="entry name" value="ThrRS_core"/>
    <property type="match status" value="1"/>
</dbReference>
<dbReference type="FunFam" id="3.10.20.30:FF:000005">
    <property type="entry name" value="Threonine--tRNA ligase"/>
    <property type="match status" value="1"/>
</dbReference>
<dbReference type="FunFam" id="3.30.54.20:FF:000002">
    <property type="entry name" value="Threonine--tRNA ligase"/>
    <property type="match status" value="1"/>
</dbReference>
<dbReference type="FunFam" id="3.30.930.10:FF:000002">
    <property type="entry name" value="Threonine--tRNA ligase"/>
    <property type="match status" value="1"/>
</dbReference>
<dbReference type="FunFam" id="3.40.50.800:FF:000001">
    <property type="entry name" value="Threonine--tRNA ligase"/>
    <property type="match status" value="1"/>
</dbReference>
<dbReference type="FunFam" id="3.30.980.10:FF:000005">
    <property type="entry name" value="Threonyl-tRNA synthetase, mitochondrial"/>
    <property type="match status" value="1"/>
</dbReference>
<dbReference type="Gene3D" id="3.10.20.30">
    <property type="match status" value="1"/>
</dbReference>
<dbReference type="Gene3D" id="3.30.54.20">
    <property type="match status" value="1"/>
</dbReference>
<dbReference type="Gene3D" id="3.40.50.800">
    <property type="entry name" value="Anticodon-binding domain"/>
    <property type="match status" value="1"/>
</dbReference>
<dbReference type="Gene3D" id="3.30.930.10">
    <property type="entry name" value="Bira Bifunctional Protein, Domain 2"/>
    <property type="match status" value="1"/>
</dbReference>
<dbReference type="Gene3D" id="3.30.980.10">
    <property type="entry name" value="Threonyl-trna Synthetase, Chain A, domain 2"/>
    <property type="match status" value="1"/>
</dbReference>
<dbReference type="HAMAP" id="MF_00184">
    <property type="entry name" value="Thr_tRNA_synth"/>
    <property type="match status" value="1"/>
</dbReference>
<dbReference type="InterPro" id="IPR002314">
    <property type="entry name" value="aa-tRNA-synt_IIb"/>
</dbReference>
<dbReference type="InterPro" id="IPR006195">
    <property type="entry name" value="aa-tRNA-synth_II"/>
</dbReference>
<dbReference type="InterPro" id="IPR045864">
    <property type="entry name" value="aa-tRNA-synth_II/BPL/LPL"/>
</dbReference>
<dbReference type="InterPro" id="IPR004154">
    <property type="entry name" value="Anticodon-bd"/>
</dbReference>
<dbReference type="InterPro" id="IPR036621">
    <property type="entry name" value="Anticodon-bd_dom_sf"/>
</dbReference>
<dbReference type="InterPro" id="IPR012675">
    <property type="entry name" value="Beta-grasp_dom_sf"/>
</dbReference>
<dbReference type="InterPro" id="IPR004095">
    <property type="entry name" value="TGS"/>
</dbReference>
<dbReference type="InterPro" id="IPR012676">
    <property type="entry name" value="TGS-like"/>
</dbReference>
<dbReference type="InterPro" id="IPR002320">
    <property type="entry name" value="Thr-tRNA-ligase_IIa"/>
</dbReference>
<dbReference type="InterPro" id="IPR018163">
    <property type="entry name" value="Thr/Ala-tRNA-synth_IIc_edit"/>
</dbReference>
<dbReference type="InterPro" id="IPR047246">
    <property type="entry name" value="ThrRS_anticodon"/>
</dbReference>
<dbReference type="InterPro" id="IPR033728">
    <property type="entry name" value="ThrRS_core"/>
</dbReference>
<dbReference type="InterPro" id="IPR012947">
    <property type="entry name" value="tRNA_SAD"/>
</dbReference>
<dbReference type="NCBIfam" id="TIGR00418">
    <property type="entry name" value="thrS"/>
    <property type="match status" value="1"/>
</dbReference>
<dbReference type="PANTHER" id="PTHR11451:SF44">
    <property type="entry name" value="THREONINE--TRNA LIGASE, CHLOROPLASTIC_MITOCHONDRIAL 2"/>
    <property type="match status" value="1"/>
</dbReference>
<dbReference type="PANTHER" id="PTHR11451">
    <property type="entry name" value="THREONINE-TRNA LIGASE"/>
    <property type="match status" value="1"/>
</dbReference>
<dbReference type="Pfam" id="PF03129">
    <property type="entry name" value="HGTP_anticodon"/>
    <property type="match status" value="1"/>
</dbReference>
<dbReference type="Pfam" id="PF02824">
    <property type="entry name" value="TGS"/>
    <property type="match status" value="1"/>
</dbReference>
<dbReference type="Pfam" id="PF00587">
    <property type="entry name" value="tRNA-synt_2b"/>
    <property type="match status" value="1"/>
</dbReference>
<dbReference type="Pfam" id="PF07973">
    <property type="entry name" value="tRNA_SAD"/>
    <property type="match status" value="1"/>
</dbReference>
<dbReference type="PRINTS" id="PR01047">
    <property type="entry name" value="TRNASYNTHTHR"/>
</dbReference>
<dbReference type="SMART" id="SM00863">
    <property type="entry name" value="tRNA_SAD"/>
    <property type="match status" value="1"/>
</dbReference>
<dbReference type="SUPFAM" id="SSF52954">
    <property type="entry name" value="Class II aaRS ABD-related"/>
    <property type="match status" value="1"/>
</dbReference>
<dbReference type="SUPFAM" id="SSF55681">
    <property type="entry name" value="Class II aaRS and biotin synthetases"/>
    <property type="match status" value="1"/>
</dbReference>
<dbReference type="SUPFAM" id="SSF81271">
    <property type="entry name" value="TGS-like"/>
    <property type="match status" value="1"/>
</dbReference>
<dbReference type="SUPFAM" id="SSF55186">
    <property type="entry name" value="ThrRS/AlaRS common domain"/>
    <property type="match status" value="1"/>
</dbReference>
<dbReference type="PROSITE" id="PS50862">
    <property type="entry name" value="AA_TRNA_LIGASE_II"/>
    <property type="match status" value="1"/>
</dbReference>
<dbReference type="PROSITE" id="PS51880">
    <property type="entry name" value="TGS"/>
    <property type="match status" value="1"/>
</dbReference>
<sequence>MPIITLPDGSKRAFEDAVTVMQVASDIGAGLAKATIAGRVNGQLKEASDLITEDAELQLITLKDEDGLHIMRHSCAHLLGHALKQLYPAAKMAIGPVVENGFYYDIDMEEKITPEDLKQIEKRMKELAKTKYEVIKEMTPRAEALATFKERQEDYKVELIEDMPDETEFGLYHHQEYIDMCRGPHVPNMGFIKAFKLTHVAGAYWRGNSDNKMLQRIYGVAFADKQELKDYLRMMEEAEKRDHRKLGKSLDLFHVDELAPGMAFWHPKGSTLYRVVENYMRQQLVENDYQEIRTPLIMDRTLWEKSGHWDKFKDNMFTTETENRDYAVKPMNCPGHIQVYNHNLSSYRDLPIRLAEFGLVHRNEPSGTLHGLMRVRSFTQDDAHIFCTPEQIKEEVQACIDLVFNTYADFGFDNIQVKFSTRPEQRVGEDDVWDLAEEALEQTLKDANLEYALQPGEGAFYGPKIEFQLKDCIGRVWQCGTIQLDFSMTQEERLNAVYIGADNEKHHPVMIHRAILGSLERFVGILVEHYEGKFPTWLAPTQLVIASIADVHNEYVNDFAKKLKKHGFRVESDLRNEKVGFKIREHTLQRVPYILVVGDQEMENGTVNVRARGGENLGSFSFEELIDHLSEDVSRLGRIVES</sequence>